<organism>
    <name type="scientific">Yersinia pseudotuberculosis serotype IB (strain PB1/+)</name>
    <dbReference type="NCBI Taxonomy" id="502801"/>
    <lineage>
        <taxon>Bacteria</taxon>
        <taxon>Pseudomonadati</taxon>
        <taxon>Pseudomonadota</taxon>
        <taxon>Gammaproteobacteria</taxon>
        <taxon>Enterobacterales</taxon>
        <taxon>Yersiniaceae</taxon>
        <taxon>Yersinia</taxon>
    </lineage>
</organism>
<accession>B2K6E6</accession>
<dbReference type="EC" id="3.2.1.23" evidence="1"/>
<dbReference type="EMBL" id="CP001048">
    <property type="protein sequence ID" value="ACC89455.1"/>
    <property type="molecule type" value="Genomic_DNA"/>
</dbReference>
<dbReference type="RefSeq" id="WP_011192578.1">
    <property type="nucleotide sequence ID" value="NZ_CP009780.1"/>
</dbReference>
<dbReference type="SMR" id="B2K6E6"/>
<dbReference type="CAZy" id="GH2">
    <property type="family name" value="Glycoside Hydrolase Family 2"/>
</dbReference>
<dbReference type="KEGG" id="ypb:YPTS_2494"/>
<dbReference type="PATRIC" id="fig|502801.10.peg.1906"/>
<dbReference type="GO" id="GO:0009341">
    <property type="term" value="C:beta-galactosidase complex"/>
    <property type="evidence" value="ECO:0007669"/>
    <property type="project" value="InterPro"/>
</dbReference>
<dbReference type="GO" id="GO:0004565">
    <property type="term" value="F:beta-galactosidase activity"/>
    <property type="evidence" value="ECO:0007669"/>
    <property type="project" value="UniProtKB-EC"/>
</dbReference>
<dbReference type="GO" id="GO:0030246">
    <property type="term" value="F:carbohydrate binding"/>
    <property type="evidence" value="ECO:0007669"/>
    <property type="project" value="InterPro"/>
</dbReference>
<dbReference type="GO" id="GO:0000287">
    <property type="term" value="F:magnesium ion binding"/>
    <property type="evidence" value="ECO:0007669"/>
    <property type="project" value="UniProtKB-UniRule"/>
</dbReference>
<dbReference type="GO" id="GO:0005990">
    <property type="term" value="P:lactose catabolic process"/>
    <property type="evidence" value="ECO:0007669"/>
    <property type="project" value="TreeGrafter"/>
</dbReference>
<dbReference type="FunFam" id="2.60.120.260:FF:000058">
    <property type="entry name" value="Beta-galactosidase"/>
    <property type="match status" value="1"/>
</dbReference>
<dbReference type="FunFam" id="3.20.20.80:FF:000018">
    <property type="entry name" value="Beta-galactosidase"/>
    <property type="match status" value="1"/>
</dbReference>
<dbReference type="Gene3D" id="2.70.98.10">
    <property type="match status" value="1"/>
</dbReference>
<dbReference type="Gene3D" id="2.60.120.260">
    <property type="entry name" value="Galactose-binding domain-like"/>
    <property type="match status" value="1"/>
</dbReference>
<dbReference type="Gene3D" id="3.20.20.80">
    <property type="entry name" value="Glycosidases"/>
    <property type="match status" value="1"/>
</dbReference>
<dbReference type="Gene3D" id="2.60.40.10">
    <property type="entry name" value="Immunoglobulins"/>
    <property type="match status" value="2"/>
</dbReference>
<dbReference type="HAMAP" id="MF_01687">
    <property type="entry name" value="Beta_gal"/>
    <property type="match status" value="1"/>
</dbReference>
<dbReference type="InterPro" id="IPR004199">
    <property type="entry name" value="B-gal_small/dom_5"/>
</dbReference>
<dbReference type="InterPro" id="IPR050347">
    <property type="entry name" value="Bact_Beta-galactosidase"/>
</dbReference>
<dbReference type="InterPro" id="IPR036156">
    <property type="entry name" value="Beta-gal/glucu_dom_sf"/>
</dbReference>
<dbReference type="InterPro" id="IPR011013">
    <property type="entry name" value="Gal_mutarotase_sf_dom"/>
</dbReference>
<dbReference type="InterPro" id="IPR008979">
    <property type="entry name" value="Galactose-bd-like_sf"/>
</dbReference>
<dbReference type="InterPro" id="IPR014718">
    <property type="entry name" value="GH-type_carb-bd"/>
</dbReference>
<dbReference type="InterPro" id="IPR006101">
    <property type="entry name" value="Glyco_hydro_2"/>
</dbReference>
<dbReference type="InterPro" id="IPR023232">
    <property type="entry name" value="Glyco_hydro_2_AS"/>
</dbReference>
<dbReference type="InterPro" id="IPR023933">
    <property type="entry name" value="Glyco_hydro_2_beta_Galsidase"/>
</dbReference>
<dbReference type="InterPro" id="IPR006103">
    <property type="entry name" value="Glyco_hydro_2_cat"/>
</dbReference>
<dbReference type="InterPro" id="IPR023230">
    <property type="entry name" value="Glyco_hydro_2_CS"/>
</dbReference>
<dbReference type="InterPro" id="IPR006102">
    <property type="entry name" value="Glyco_hydro_2_Ig-like"/>
</dbReference>
<dbReference type="InterPro" id="IPR006104">
    <property type="entry name" value="Glyco_hydro_2_N"/>
</dbReference>
<dbReference type="InterPro" id="IPR017853">
    <property type="entry name" value="Glycoside_hydrolase_SF"/>
</dbReference>
<dbReference type="InterPro" id="IPR013783">
    <property type="entry name" value="Ig-like_fold"/>
</dbReference>
<dbReference type="InterPro" id="IPR032312">
    <property type="entry name" value="LacZ_4"/>
</dbReference>
<dbReference type="NCBIfam" id="NF007074">
    <property type="entry name" value="PRK09525.1"/>
    <property type="match status" value="1"/>
</dbReference>
<dbReference type="PANTHER" id="PTHR46323">
    <property type="entry name" value="BETA-GALACTOSIDASE"/>
    <property type="match status" value="1"/>
</dbReference>
<dbReference type="PANTHER" id="PTHR46323:SF2">
    <property type="entry name" value="BETA-GALACTOSIDASE"/>
    <property type="match status" value="1"/>
</dbReference>
<dbReference type="Pfam" id="PF02929">
    <property type="entry name" value="Bgal_small_N"/>
    <property type="match status" value="1"/>
</dbReference>
<dbReference type="Pfam" id="PF00703">
    <property type="entry name" value="Glyco_hydro_2"/>
    <property type="match status" value="1"/>
</dbReference>
<dbReference type="Pfam" id="PF02836">
    <property type="entry name" value="Glyco_hydro_2_C"/>
    <property type="match status" value="1"/>
</dbReference>
<dbReference type="Pfam" id="PF02837">
    <property type="entry name" value="Glyco_hydro_2_N"/>
    <property type="match status" value="1"/>
</dbReference>
<dbReference type="Pfam" id="PF16353">
    <property type="entry name" value="LacZ_4"/>
    <property type="match status" value="1"/>
</dbReference>
<dbReference type="PRINTS" id="PR00132">
    <property type="entry name" value="GLHYDRLASE2"/>
</dbReference>
<dbReference type="SMART" id="SM01038">
    <property type="entry name" value="Bgal_small_N"/>
    <property type="match status" value="1"/>
</dbReference>
<dbReference type="SUPFAM" id="SSF51445">
    <property type="entry name" value="(Trans)glycosidases"/>
    <property type="match status" value="1"/>
</dbReference>
<dbReference type="SUPFAM" id="SSF49303">
    <property type="entry name" value="beta-Galactosidase/glucuronidase domain"/>
    <property type="match status" value="2"/>
</dbReference>
<dbReference type="SUPFAM" id="SSF74650">
    <property type="entry name" value="Galactose mutarotase-like"/>
    <property type="match status" value="1"/>
</dbReference>
<dbReference type="SUPFAM" id="SSF49785">
    <property type="entry name" value="Galactose-binding domain-like"/>
    <property type="match status" value="1"/>
</dbReference>
<dbReference type="PROSITE" id="PS00719">
    <property type="entry name" value="GLYCOSYL_HYDROL_F2_1"/>
    <property type="match status" value="1"/>
</dbReference>
<dbReference type="PROSITE" id="PS00608">
    <property type="entry name" value="GLYCOSYL_HYDROL_F2_2"/>
    <property type="match status" value="1"/>
</dbReference>
<feature type="chain" id="PRO_0000367021" description="Beta-galactosidase">
    <location>
        <begin position="1"/>
        <end position="1066"/>
    </location>
</feature>
<feature type="active site" description="Proton donor" evidence="1">
    <location>
        <position position="477"/>
    </location>
</feature>
<feature type="active site" description="Nucleophile" evidence="1">
    <location>
        <position position="553"/>
    </location>
</feature>
<feature type="binding site" evidence="1">
    <location>
        <position position="110"/>
    </location>
    <ligand>
        <name>substrate</name>
    </ligand>
</feature>
<feature type="binding site" evidence="1">
    <location>
        <position position="209"/>
    </location>
    <ligand>
        <name>Na(+)</name>
        <dbReference type="ChEBI" id="CHEBI:29101"/>
    </ligand>
</feature>
<feature type="binding site" evidence="1">
    <location>
        <position position="209"/>
    </location>
    <ligand>
        <name>substrate</name>
    </ligand>
</feature>
<feature type="binding site" evidence="1">
    <location>
        <position position="432"/>
    </location>
    <ligand>
        <name>Mg(2+)</name>
        <dbReference type="ChEBI" id="CHEBI:18420"/>
        <label>1</label>
    </ligand>
</feature>
<feature type="binding site" evidence="1">
    <location>
        <position position="434"/>
    </location>
    <ligand>
        <name>Mg(2+)</name>
        <dbReference type="ChEBI" id="CHEBI:18420"/>
        <label>1</label>
    </ligand>
</feature>
<feature type="binding site" evidence="1">
    <location>
        <position position="477"/>
    </location>
    <ligand>
        <name>Mg(2+)</name>
        <dbReference type="ChEBI" id="CHEBI:18420"/>
        <label>1</label>
    </ligand>
</feature>
<feature type="binding site" evidence="1">
    <location>
        <position position="477"/>
    </location>
    <ligand>
        <name>substrate</name>
    </ligand>
</feature>
<feature type="binding site" evidence="1">
    <location>
        <begin position="553"/>
        <end position="556"/>
    </location>
    <ligand>
        <name>substrate</name>
    </ligand>
</feature>
<feature type="binding site" evidence="1">
    <location>
        <position position="613"/>
    </location>
    <ligand>
        <name>Mg(2+)</name>
        <dbReference type="ChEBI" id="CHEBI:18420"/>
        <label>2</label>
    </ligand>
</feature>
<feature type="binding site" evidence="1">
    <location>
        <position position="617"/>
    </location>
    <ligand>
        <name>Na(+)</name>
        <dbReference type="ChEBI" id="CHEBI:29101"/>
    </ligand>
</feature>
<feature type="binding site" evidence="1">
    <location>
        <position position="620"/>
    </location>
    <ligand>
        <name>Na(+)</name>
        <dbReference type="ChEBI" id="CHEBI:29101"/>
    </ligand>
</feature>
<feature type="binding site" evidence="1">
    <location>
        <position position="620"/>
    </location>
    <ligand>
        <name>substrate</name>
    </ligand>
</feature>
<feature type="binding site" evidence="1">
    <location>
        <position position="1041"/>
    </location>
    <ligand>
        <name>substrate</name>
    </ligand>
</feature>
<feature type="site" description="Transition state stabilizer" evidence="1">
    <location>
        <position position="373"/>
    </location>
</feature>
<feature type="site" description="Transition state stabilizer" evidence="1">
    <location>
        <position position="407"/>
    </location>
</feature>
<evidence type="ECO:0000255" key="1">
    <source>
        <dbReference type="HAMAP-Rule" id="MF_01687"/>
    </source>
</evidence>
<gene>
    <name evidence="1" type="primary">lacZ</name>
    <name type="ordered locus">YPTS_2494</name>
</gene>
<protein>
    <recommendedName>
        <fullName evidence="1">Beta-galactosidase</fullName>
        <shortName evidence="1">Beta-gal</shortName>
        <ecNumber evidence="1">3.2.1.23</ecNumber>
    </recommendedName>
    <alternativeName>
        <fullName evidence="1">Lactase</fullName>
    </alternativeName>
</protein>
<comment type="catalytic activity">
    <reaction evidence="1">
        <text>Hydrolysis of terminal non-reducing beta-D-galactose residues in beta-D-galactosides.</text>
        <dbReference type="EC" id="3.2.1.23"/>
    </reaction>
</comment>
<comment type="cofactor">
    <cofactor evidence="1">
        <name>Mg(2+)</name>
        <dbReference type="ChEBI" id="CHEBI:18420"/>
    </cofactor>
    <text evidence="1">Binds 2 magnesium ions per monomer.</text>
</comment>
<comment type="cofactor">
    <cofactor evidence="1">
        <name>Na(+)</name>
        <dbReference type="ChEBI" id="CHEBI:29101"/>
    </cofactor>
    <text evidence="1">Binds 1 sodium ion per monomer.</text>
</comment>
<comment type="subunit">
    <text evidence="1">Homotetramer.</text>
</comment>
<comment type="similarity">
    <text evidence="1">Belongs to the glycosyl hydrolase 2 family.</text>
</comment>
<reference key="1">
    <citation type="submission" date="2008-04" db="EMBL/GenBank/DDBJ databases">
        <title>Complete sequence of Yersinia pseudotuberculosis PB1/+.</title>
        <authorList>
            <person name="Copeland A."/>
            <person name="Lucas S."/>
            <person name="Lapidus A."/>
            <person name="Glavina del Rio T."/>
            <person name="Dalin E."/>
            <person name="Tice H."/>
            <person name="Bruce D."/>
            <person name="Goodwin L."/>
            <person name="Pitluck S."/>
            <person name="Munk A.C."/>
            <person name="Brettin T."/>
            <person name="Detter J.C."/>
            <person name="Han C."/>
            <person name="Tapia R."/>
            <person name="Schmutz J."/>
            <person name="Larimer F."/>
            <person name="Land M."/>
            <person name="Hauser L."/>
            <person name="Challacombe J.F."/>
            <person name="Green L."/>
            <person name="Lindler L.E."/>
            <person name="Nikolich M.P."/>
            <person name="Richardson P."/>
        </authorList>
    </citation>
    <scope>NUCLEOTIDE SEQUENCE [LARGE SCALE GENOMIC DNA]</scope>
    <source>
        <strain>PB1/+</strain>
    </source>
</reference>
<keyword id="KW-0326">Glycosidase</keyword>
<keyword id="KW-0378">Hydrolase</keyword>
<keyword id="KW-0460">Magnesium</keyword>
<keyword id="KW-0479">Metal-binding</keyword>
<keyword id="KW-0915">Sodium</keyword>
<proteinExistence type="inferred from homology"/>
<sequence length="1066" mass="123480">MTSQEKVPFQVQLSLPQILSRRDWENPQITQYHRLEAHPPFHSWRDVESAQKDRPSPQQQTLNGLWSFSYFTQPEAVPEHWVRCDLAEAKPLPVPANWQLHGYDAPIYTNIQYPIPVNPPRVPDLNPTGCYSRDFTLEPSWLASGKTRIIFDGVSSAFYLWCNGQWVGYSQDSRLPAEFDLTPYLQAGSNRIAVLVLRWSDGSYLEDQDMWRMSGIFRDVKLLHKPEIHLRDIHIMTHLSPEFTSANLEVMAAVNIPSLQLNDPQVTGSYQLRVQLWLADKLVASLQQPLGTQAIDERGPYTDRTQLVLRIDQPLLWSAEQPTLYRAVVSLLNHQQELIEAEAYDVGFRQVAIHQGLLKINGKAVLIRGVNRHEHHPQTGQAIDEESLLQDILLMKQHNFNAVRCSHYPNHPLWYRLCDRYGLYVVDEANIETHGMQPMSRLSDDPSWFSAFSERVTRMVQRDRNHPCIIIWSLGNESGHGATHDALYRWIKTNDPTRPVQYEGGGANTLATDILCPMYARVDEDQPFPAVPKWSIKKWIGLPNESRPLILCEYAHAMGNSFGGFARYWQAFRQYPRLQGGFIWDWVDQSLTHHNDHGQPYWAYGGDFGDTPNDRQFCMNGLVFPDRSPHPSLYEAQCAQQFFQFSLLSTTPLVINITSEYLFRESDNEQLYWRIMLEGESVLEGSQPLNLSPESSQCYRLAEKLPTLNKPGQLWLNVEIRQPKETPWSPAQHRSAWHQWRLPQPLFSPSSDLTNATAHYAPQLQHNLQLQHNRQLQHDLQLQQDEQHIKVTYQQQCWQFSRQTGRLDQWWVADKPMLLRPLQDQFVRAPLDNDIGISEATHIDPNAWVERWKKAGMYQLQQRCLSLHVDHLSHSVQISAEYGYEFEQEPLLHSHWVYRFDRHGRMTIDVNVRIATSLPAPARIGMCCQLADISPTVEWLGLGPHENYPDRQLAAQYGHWSLPLEQMHTAYIFPSENGLRCNTHTLNYGRWTLTGDFHFGISRYSTQQLMVTSHQHLLEPEEGTWLNIDGFHMGVGGDDSWSPSVHIDDILTRETYQYQICWQYKV</sequence>
<name>BGAL_YERPB</name>